<keyword id="KW-0238">DNA-binding</keyword>
<keyword id="KW-0378">Hydrolase</keyword>
<keyword id="KW-0479">Metal-binding</keyword>
<keyword id="KW-0540">Nuclease</keyword>
<keyword id="KW-0597">Phosphoprotein</keyword>
<keyword id="KW-1185">Reference proteome</keyword>
<keyword id="KW-0694">RNA-binding</keyword>
<keyword id="KW-0862">Zinc</keyword>
<keyword id="KW-0863">Zinc-finger</keyword>
<comment type="function">
    <text evidence="4">Possesses RNA-binding and ribonuclease activities in vitro.</text>
</comment>
<protein>
    <recommendedName>
        <fullName>Zinc finger CCCH domain-containing protein 46</fullName>
        <shortName>AtC3H46</shortName>
        <ecNumber>3.1.-.-</ecNumber>
    </recommendedName>
</protein>
<name>C3H46_ARATH</name>
<gene>
    <name type="ordered locus">At3g51950</name>
    <name type="ORF">F4F15.60</name>
</gene>
<accession>Q9SV09</accession>
<accession>A0A1I9LPV9</accession>
<accession>Q8L9E0</accession>
<accession>Q8RXK0</accession>
<sequence length="540" mass="59789">MDGYEATRIVLSRIQSLDPENASKIMGLLLLQDHGEKEMIRLAFGPETLVHSVIVKAKKELGLMNCSRSPWSHQDELISPKNNRGSSLNPASLPFYANGGRSSRDLTNDFELMDDMNSRSTDFLGSVHARSGSCVLDGLGYGGDSDLGFGGVPCSYFARGFCKNGASCRFVHSDGGADLVGSPSRIELLRSNSVPPRLAHHFMTRSSLPSFSTKGVNLQQNDVQRAAAALMIGDELQKLGRWRPERIDLSAMACPASRQIYLTFPADSRFREEDVSNYFSTFGPVQDVRIPYQQKRMFGFVTFVYPETVKSILAKGNPHFVCDSRVLVKPYKEKGKVPDKYRTNQTTERELSPTGLDSSPRDVLGGRGFYNNTQDVLWRSKFEEEILELQSRRLMNLQLLDVKKHFQLNSPTNIHSPNPFSQSLISPRPLSVIKREYDGGEKGKGSSKEGSDDDTMNLPERLEDSLPDSPFASPAHHLLLFADSADNNGSDLWSPSSDNDDNSTPSTLSDSFNSFNYQMPRLPAIGMLPGRGGPTCRVGI</sequence>
<organism>
    <name type="scientific">Arabidopsis thaliana</name>
    <name type="common">Mouse-ear cress</name>
    <dbReference type="NCBI Taxonomy" id="3702"/>
    <lineage>
        <taxon>Eukaryota</taxon>
        <taxon>Viridiplantae</taxon>
        <taxon>Streptophyta</taxon>
        <taxon>Embryophyta</taxon>
        <taxon>Tracheophyta</taxon>
        <taxon>Spermatophyta</taxon>
        <taxon>Magnoliopsida</taxon>
        <taxon>eudicotyledons</taxon>
        <taxon>Gunneridae</taxon>
        <taxon>Pentapetalae</taxon>
        <taxon>rosids</taxon>
        <taxon>malvids</taxon>
        <taxon>Brassicales</taxon>
        <taxon>Brassicaceae</taxon>
        <taxon>Camelineae</taxon>
        <taxon>Arabidopsis</taxon>
    </lineage>
</organism>
<feature type="chain" id="PRO_0000372000" description="Zinc finger CCCH domain-containing protein 46">
    <location>
        <begin position="1"/>
        <end position="540"/>
    </location>
</feature>
<feature type="domain" description="RRM" evidence="1">
    <location>
        <begin position="258"/>
        <end position="334"/>
    </location>
</feature>
<feature type="zinc finger region" description="C3H1-type" evidence="2">
    <location>
        <begin position="148"/>
        <end position="175"/>
    </location>
</feature>
<feature type="region of interest" description="Disordered" evidence="3">
    <location>
        <begin position="337"/>
        <end position="365"/>
    </location>
</feature>
<feature type="region of interest" description="Disordered" evidence="3">
    <location>
        <begin position="436"/>
        <end position="469"/>
    </location>
</feature>
<feature type="region of interest" description="Disordered" evidence="3">
    <location>
        <begin position="490"/>
        <end position="514"/>
    </location>
</feature>
<feature type="compositionally biased region" description="Basic and acidic residues" evidence="3">
    <location>
        <begin position="337"/>
        <end position="351"/>
    </location>
</feature>
<feature type="compositionally biased region" description="Basic and acidic residues" evidence="3">
    <location>
        <begin position="436"/>
        <end position="450"/>
    </location>
</feature>
<feature type="compositionally biased region" description="Low complexity" evidence="3">
    <location>
        <begin position="490"/>
        <end position="511"/>
    </location>
</feature>
<feature type="modified residue" description="Phosphoserine" evidence="6">
    <location>
        <position position="451"/>
    </location>
</feature>
<feature type="sequence conflict" description="In Ref. 5; AAM66020." evidence="5" ref="5">
    <original>E</original>
    <variation>D</variation>
    <location>
        <position position="187"/>
    </location>
</feature>
<feature type="sequence conflict" description="In Ref. 5; AAM66020." evidence="5" ref="5">
    <original>T</original>
    <variation>P</variation>
    <location>
        <position position="213"/>
    </location>
</feature>
<feature type="sequence conflict" description="In Ref. 3; AAL87320." evidence="5" ref="3">
    <original>E</original>
    <variation>V</variation>
    <location>
        <position position="348"/>
    </location>
</feature>
<dbReference type="EC" id="3.1.-.-"/>
<dbReference type="EMBL" id="AL049711">
    <property type="protein sequence ID" value="CAB41315.1"/>
    <property type="molecule type" value="Genomic_DNA"/>
</dbReference>
<dbReference type="EMBL" id="CP002686">
    <property type="protein sequence ID" value="AEE78866.1"/>
    <property type="molecule type" value="Genomic_DNA"/>
</dbReference>
<dbReference type="EMBL" id="CP002686">
    <property type="protein sequence ID" value="AEE78867.1"/>
    <property type="molecule type" value="Genomic_DNA"/>
</dbReference>
<dbReference type="EMBL" id="CP002686">
    <property type="protein sequence ID" value="ANM64616.1"/>
    <property type="molecule type" value="Genomic_DNA"/>
</dbReference>
<dbReference type="EMBL" id="CP002686">
    <property type="protein sequence ID" value="ANM64617.1"/>
    <property type="molecule type" value="Genomic_DNA"/>
</dbReference>
<dbReference type="EMBL" id="AY080846">
    <property type="protein sequence ID" value="AAL87320.1"/>
    <property type="molecule type" value="mRNA"/>
</dbReference>
<dbReference type="EMBL" id="AY150500">
    <property type="protein sequence ID" value="AAN13016.1"/>
    <property type="molecule type" value="mRNA"/>
</dbReference>
<dbReference type="EMBL" id="AK316715">
    <property type="protein sequence ID" value="BAH19442.1"/>
    <property type="molecule type" value="mRNA"/>
</dbReference>
<dbReference type="EMBL" id="AY088484">
    <property type="protein sequence ID" value="AAM66020.1"/>
    <property type="molecule type" value="mRNA"/>
</dbReference>
<dbReference type="PIR" id="T49074">
    <property type="entry name" value="T49074"/>
</dbReference>
<dbReference type="RefSeq" id="NP_001030840.1">
    <property type="nucleotide sequence ID" value="NM_001035763.2"/>
</dbReference>
<dbReference type="RefSeq" id="NP_001326632.1">
    <property type="nucleotide sequence ID" value="NM_001339542.1"/>
</dbReference>
<dbReference type="RefSeq" id="NP_001326633.1">
    <property type="nucleotide sequence ID" value="NM_001339541.1"/>
</dbReference>
<dbReference type="RefSeq" id="NP_190763.1">
    <property type="nucleotide sequence ID" value="NM_115054.4"/>
</dbReference>
<dbReference type="SMR" id="Q9SV09"/>
<dbReference type="BioGRID" id="9676">
    <property type="interactions" value="3"/>
</dbReference>
<dbReference type="FunCoup" id="Q9SV09">
    <property type="interactions" value="1231"/>
</dbReference>
<dbReference type="IntAct" id="Q9SV09">
    <property type="interactions" value="2"/>
</dbReference>
<dbReference type="STRING" id="3702.Q9SV09"/>
<dbReference type="GlyGen" id="Q9SV09">
    <property type="glycosylation" value="2 sites, 1 O-linked glycan (2 sites)"/>
</dbReference>
<dbReference type="iPTMnet" id="Q9SV09"/>
<dbReference type="PaxDb" id="3702-AT3G51950.2"/>
<dbReference type="ProteomicsDB" id="240526"/>
<dbReference type="EnsemblPlants" id="AT3G51950.1">
    <property type="protein sequence ID" value="AT3G51950.1"/>
    <property type="gene ID" value="AT3G51950"/>
</dbReference>
<dbReference type="EnsemblPlants" id="AT3G51950.2">
    <property type="protein sequence ID" value="AT3G51950.2"/>
    <property type="gene ID" value="AT3G51950"/>
</dbReference>
<dbReference type="EnsemblPlants" id="AT3G51950.3">
    <property type="protein sequence ID" value="AT3G51950.3"/>
    <property type="gene ID" value="AT3G51950"/>
</dbReference>
<dbReference type="EnsemblPlants" id="AT3G51950.4">
    <property type="protein sequence ID" value="AT3G51950.4"/>
    <property type="gene ID" value="AT3G51950"/>
</dbReference>
<dbReference type="GeneID" id="824358"/>
<dbReference type="Gramene" id="AT3G51950.1">
    <property type="protein sequence ID" value="AT3G51950.1"/>
    <property type="gene ID" value="AT3G51950"/>
</dbReference>
<dbReference type="Gramene" id="AT3G51950.2">
    <property type="protein sequence ID" value="AT3G51950.2"/>
    <property type="gene ID" value="AT3G51950"/>
</dbReference>
<dbReference type="Gramene" id="AT3G51950.3">
    <property type="protein sequence ID" value="AT3G51950.3"/>
    <property type="gene ID" value="AT3G51950"/>
</dbReference>
<dbReference type="Gramene" id="AT3G51950.4">
    <property type="protein sequence ID" value="AT3G51950.4"/>
    <property type="gene ID" value="AT3G51950"/>
</dbReference>
<dbReference type="KEGG" id="ath:AT3G51950"/>
<dbReference type="Araport" id="AT3G51950"/>
<dbReference type="TAIR" id="AT3G51950"/>
<dbReference type="eggNOG" id="ENOG502QWIK">
    <property type="taxonomic scope" value="Eukaryota"/>
</dbReference>
<dbReference type="HOGENOM" id="CLU_028778_0_0_1"/>
<dbReference type="InParanoid" id="Q9SV09"/>
<dbReference type="OMA" id="FEMMEHC"/>
<dbReference type="PhylomeDB" id="Q9SV09"/>
<dbReference type="PRO" id="PR:Q9SV09"/>
<dbReference type="Proteomes" id="UP000006548">
    <property type="component" value="Chromosome 3"/>
</dbReference>
<dbReference type="ExpressionAtlas" id="Q9SV09">
    <property type="expression patterns" value="baseline and differential"/>
</dbReference>
<dbReference type="GO" id="GO:0003677">
    <property type="term" value="F:DNA binding"/>
    <property type="evidence" value="ECO:0007669"/>
    <property type="project" value="UniProtKB-KW"/>
</dbReference>
<dbReference type="GO" id="GO:0003729">
    <property type="term" value="F:mRNA binding"/>
    <property type="evidence" value="ECO:0007005"/>
    <property type="project" value="TAIR"/>
</dbReference>
<dbReference type="GO" id="GO:0004518">
    <property type="term" value="F:nuclease activity"/>
    <property type="evidence" value="ECO:0007669"/>
    <property type="project" value="UniProtKB-KW"/>
</dbReference>
<dbReference type="GO" id="GO:0008270">
    <property type="term" value="F:zinc ion binding"/>
    <property type="evidence" value="ECO:0007669"/>
    <property type="project" value="UniProtKB-KW"/>
</dbReference>
<dbReference type="CDD" id="cd12458">
    <property type="entry name" value="RRM_AtC3H46_like"/>
    <property type="match status" value="1"/>
</dbReference>
<dbReference type="FunFam" id="1.20.120.1350:FF:000002">
    <property type="entry name" value="Zinc finger CCCH domain-containing protein 46"/>
    <property type="match status" value="1"/>
</dbReference>
<dbReference type="FunFam" id="3.30.70.330:FF:000678">
    <property type="entry name" value="zinc finger CCCH domain-containing protein 53-like isoform X2"/>
    <property type="match status" value="1"/>
</dbReference>
<dbReference type="Gene3D" id="3.30.70.330">
    <property type="match status" value="1"/>
</dbReference>
<dbReference type="Gene3D" id="1.20.120.1350">
    <property type="entry name" value="Pneumovirus matrix protein 2 (M2), zinc-binding domain"/>
    <property type="match status" value="1"/>
</dbReference>
<dbReference type="InterPro" id="IPR056276">
    <property type="entry name" value="AtC3H46-like_PABC-like"/>
</dbReference>
<dbReference type="InterPro" id="IPR034365">
    <property type="entry name" value="AtC3H46-like_RRM"/>
</dbReference>
<dbReference type="InterPro" id="IPR012677">
    <property type="entry name" value="Nucleotide-bd_a/b_plait_sf"/>
</dbReference>
<dbReference type="InterPro" id="IPR035979">
    <property type="entry name" value="RBD_domain_sf"/>
</dbReference>
<dbReference type="InterPro" id="IPR000504">
    <property type="entry name" value="RRM_dom"/>
</dbReference>
<dbReference type="InterPro" id="IPR000571">
    <property type="entry name" value="Znf_CCCH"/>
</dbReference>
<dbReference type="InterPro" id="IPR036855">
    <property type="entry name" value="Znf_CCCH_sf"/>
</dbReference>
<dbReference type="PANTHER" id="PTHR24009">
    <property type="entry name" value="RNA-BINDING (RRM/RBD/RNP MOTIFS)"/>
    <property type="match status" value="1"/>
</dbReference>
<dbReference type="PANTHER" id="PTHR24009:SF3">
    <property type="entry name" value="RNA-BINDING (RRM_RBD_RNP MOTIFS) FAMILY PROTEIN-RELATED"/>
    <property type="match status" value="1"/>
</dbReference>
<dbReference type="Pfam" id="PF23182">
    <property type="entry name" value="PABC_AtC3H46"/>
    <property type="match status" value="1"/>
</dbReference>
<dbReference type="Pfam" id="PF00076">
    <property type="entry name" value="RRM_1"/>
    <property type="match status" value="1"/>
</dbReference>
<dbReference type="Pfam" id="PF00642">
    <property type="entry name" value="zf-CCCH"/>
    <property type="match status" value="1"/>
</dbReference>
<dbReference type="SMART" id="SM00360">
    <property type="entry name" value="RRM"/>
    <property type="match status" value="1"/>
</dbReference>
<dbReference type="SMART" id="SM00356">
    <property type="entry name" value="ZnF_C3H1"/>
    <property type="match status" value="1"/>
</dbReference>
<dbReference type="SUPFAM" id="SSF90229">
    <property type="entry name" value="CCCH zinc finger"/>
    <property type="match status" value="1"/>
</dbReference>
<dbReference type="SUPFAM" id="SSF54928">
    <property type="entry name" value="RNA-binding domain, RBD"/>
    <property type="match status" value="1"/>
</dbReference>
<dbReference type="PROSITE" id="PS50102">
    <property type="entry name" value="RRM"/>
    <property type="match status" value="1"/>
</dbReference>
<dbReference type="PROSITE" id="PS50103">
    <property type="entry name" value="ZF_C3H1"/>
    <property type="match status" value="1"/>
</dbReference>
<reference key="1">
    <citation type="journal article" date="2000" name="Nature">
        <title>Sequence and analysis of chromosome 3 of the plant Arabidopsis thaliana.</title>
        <authorList>
            <person name="Salanoubat M."/>
            <person name="Lemcke K."/>
            <person name="Rieger M."/>
            <person name="Ansorge W."/>
            <person name="Unseld M."/>
            <person name="Fartmann B."/>
            <person name="Valle G."/>
            <person name="Bloecker H."/>
            <person name="Perez-Alonso M."/>
            <person name="Obermaier B."/>
            <person name="Delseny M."/>
            <person name="Boutry M."/>
            <person name="Grivell L.A."/>
            <person name="Mache R."/>
            <person name="Puigdomenech P."/>
            <person name="De Simone V."/>
            <person name="Choisne N."/>
            <person name="Artiguenave F."/>
            <person name="Robert C."/>
            <person name="Brottier P."/>
            <person name="Wincker P."/>
            <person name="Cattolico L."/>
            <person name="Weissenbach J."/>
            <person name="Saurin W."/>
            <person name="Quetier F."/>
            <person name="Schaefer M."/>
            <person name="Mueller-Auer S."/>
            <person name="Gabel C."/>
            <person name="Fuchs M."/>
            <person name="Benes V."/>
            <person name="Wurmbach E."/>
            <person name="Drzonek H."/>
            <person name="Erfle H."/>
            <person name="Jordan N."/>
            <person name="Bangert S."/>
            <person name="Wiedelmann R."/>
            <person name="Kranz H."/>
            <person name="Voss H."/>
            <person name="Holland R."/>
            <person name="Brandt P."/>
            <person name="Nyakatura G."/>
            <person name="Vezzi A."/>
            <person name="D'Angelo M."/>
            <person name="Pallavicini A."/>
            <person name="Toppo S."/>
            <person name="Simionati B."/>
            <person name="Conrad A."/>
            <person name="Hornischer K."/>
            <person name="Kauer G."/>
            <person name="Loehnert T.-H."/>
            <person name="Nordsiek G."/>
            <person name="Reichelt J."/>
            <person name="Scharfe M."/>
            <person name="Schoen O."/>
            <person name="Bargues M."/>
            <person name="Terol J."/>
            <person name="Climent J."/>
            <person name="Navarro P."/>
            <person name="Collado C."/>
            <person name="Perez-Perez A."/>
            <person name="Ottenwaelder B."/>
            <person name="Duchemin D."/>
            <person name="Cooke R."/>
            <person name="Laudie M."/>
            <person name="Berger-Llauro C."/>
            <person name="Purnelle B."/>
            <person name="Masuy D."/>
            <person name="de Haan M."/>
            <person name="Maarse A.C."/>
            <person name="Alcaraz J.-P."/>
            <person name="Cottet A."/>
            <person name="Casacuberta E."/>
            <person name="Monfort A."/>
            <person name="Argiriou A."/>
            <person name="Flores M."/>
            <person name="Liguori R."/>
            <person name="Vitale D."/>
            <person name="Mannhaupt G."/>
            <person name="Haase D."/>
            <person name="Schoof H."/>
            <person name="Rudd S."/>
            <person name="Zaccaria P."/>
            <person name="Mewes H.-W."/>
            <person name="Mayer K.F.X."/>
            <person name="Kaul S."/>
            <person name="Town C.D."/>
            <person name="Koo H.L."/>
            <person name="Tallon L.J."/>
            <person name="Jenkins J."/>
            <person name="Rooney T."/>
            <person name="Rizzo M."/>
            <person name="Walts A."/>
            <person name="Utterback T."/>
            <person name="Fujii C.Y."/>
            <person name="Shea T.P."/>
            <person name="Creasy T.H."/>
            <person name="Haas B."/>
            <person name="Maiti R."/>
            <person name="Wu D."/>
            <person name="Peterson J."/>
            <person name="Van Aken S."/>
            <person name="Pai G."/>
            <person name="Militscher J."/>
            <person name="Sellers P."/>
            <person name="Gill J.E."/>
            <person name="Feldblyum T.V."/>
            <person name="Preuss D."/>
            <person name="Lin X."/>
            <person name="Nierman W.C."/>
            <person name="Salzberg S.L."/>
            <person name="White O."/>
            <person name="Venter J.C."/>
            <person name="Fraser C.M."/>
            <person name="Kaneko T."/>
            <person name="Nakamura Y."/>
            <person name="Sato S."/>
            <person name="Kato T."/>
            <person name="Asamizu E."/>
            <person name="Sasamoto S."/>
            <person name="Kimura T."/>
            <person name="Idesawa K."/>
            <person name="Kawashima K."/>
            <person name="Kishida Y."/>
            <person name="Kiyokawa C."/>
            <person name="Kohara M."/>
            <person name="Matsumoto M."/>
            <person name="Matsuno A."/>
            <person name="Muraki A."/>
            <person name="Nakayama S."/>
            <person name="Nakazaki N."/>
            <person name="Shinpo S."/>
            <person name="Takeuchi C."/>
            <person name="Wada T."/>
            <person name="Watanabe A."/>
            <person name="Yamada M."/>
            <person name="Yasuda M."/>
            <person name="Tabata S."/>
        </authorList>
    </citation>
    <scope>NUCLEOTIDE SEQUENCE [LARGE SCALE GENOMIC DNA]</scope>
    <source>
        <strain>cv. Columbia</strain>
    </source>
</reference>
<reference key="2">
    <citation type="journal article" date="2017" name="Plant J.">
        <title>Araport11: a complete reannotation of the Arabidopsis thaliana reference genome.</title>
        <authorList>
            <person name="Cheng C.Y."/>
            <person name="Krishnakumar V."/>
            <person name="Chan A.P."/>
            <person name="Thibaud-Nissen F."/>
            <person name="Schobel S."/>
            <person name="Town C.D."/>
        </authorList>
    </citation>
    <scope>GENOME REANNOTATION</scope>
    <source>
        <strain>cv. Columbia</strain>
    </source>
</reference>
<reference key="3">
    <citation type="journal article" date="2003" name="Science">
        <title>Empirical analysis of transcriptional activity in the Arabidopsis genome.</title>
        <authorList>
            <person name="Yamada K."/>
            <person name="Lim J."/>
            <person name="Dale J.M."/>
            <person name="Chen H."/>
            <person name="Shinn P."/>
            <person name="Palm C.J."/>
            <person name="Southwick A.M."/>
            <person name="Wu H.C."/>
            <person name="Kim C.J."/>
            <person name="Nguyen M."/>
            <person name="Pham P.K."/>
            <person name="Cheuk R.F."/>
            <person name="Karlin-Newmann G."/>
            <person name="Liu S.X."/>
            <person name="Lam B."/>
            <person name="Sakano H."/>
            <person name="Wu T."/>
            <person name="Yu G."/>
            <person name="Miranda M."/>
            <person name="Quach H.L."/>
            <person name="Tripp M."/>
            <person name="Chang C.H."/>
            <person name="Lee J.M."/>
            <person name="Toriumi M.J."/>
            <person name="Chan M.M."/>
            <person name="Tang C.C."/>
            <person name="Onodera C.S."/>
            <person name="Deng J.M."/>
            <person name="Akiyama K."/>
            <person name="Ansari Y."/>
            <person name="Arakawa T."/>
            <person name="Banh J."/>
            <person name="Banno F."/>
            <person name="Bowser L."/>
            <person name="Brooks S.Y."/>
            <person name="Carninci P."/>
            <person name="Chao Q."/>
            <person name="Choy N."/>
            <person name="Enju A."/>
            <person name="Goldsmith A.D."/>
            <person name="Gurjal M."/>
            <person name="Hansen N.F."/>
            <person name="Hayashizaki Y."/>
            <person name="Johnson-Hopson C."/>
            <person name="Hsuan V.W."/>
            <person name="Iida K."/>
            <person name="Karnes M."/>
            <person name="Khan S."/>
            <person name="Koesema E."/>
            <person name="Ishida J."/>
            <person name="Jiang P.X."/>
            <person name="Jones T."/>
            <person name="Kawai J."/>
            <person name="Kamiya A."/>
            <person name="Meyers C."/>
            <person name="Nakajima M."/>
            <person name="Narusaka M."/>
            <person name="Seki M."/>
            <person name="Sakurai T."/>
            <person name="Satou M."/>
            <person name="Tamse R."/>
            <person name="Vaysberg M."/>
            <person name="Wallender E.K."/>
            <person name="Wong C."/>
            <person name="Yamamura Y."/>
            <person name="Yuan S."/>
            <person name="Shinozaki K."/>
            <person name="Davis R.W."/>
            <person name="Theologis A."/>
            <person name="Ecker J.R."/>
        </authorList>
    </citation>
    <scope>NUCLEOTIDE SEQUENCE [LARGE SCALE MRNA]</scope>
    <source>
        <strain>cv. Columbia</strain>
    </source>
</reference>
<reference key="4">
    <citation type="journal article" date="2009" name="DNA Res.">
        <title>Analysis of multiple occurrences of alternative splicing events in Arabidopsis thaliana using novel sequenced full-length cDNAs.</title>
        <authorList>
            <person name="Iida K."/>
            <person name="Fukami-Kobayashi K."/>
            <person name="Toyoda A."/>
            <person name="Sakaki Y."/>
            <person name="Kobayashi M."/>
            <person name="Seki M."/>
            <person name="Shinozaki K."/>
        </authorList>
    </citation>
    <scope>NUCLEOTIDE SEQUENCE [LARGE SCALE MRNA]</scope>
    <source>
        <strain>cv. Columbia</strain>
    </source>
</reference>
<reference key="5">
    <citation type="submission" date="2002-03" db="EMBL/GenBank/DDBJ databases">
        <title>Full-length cDNA from Arabidopsis thaliana.</title>
        <authorList>
            <person name="Brover V.V."/>
            <person name="Troukhan M.E."/>
            <person name="Alexandrov N.A."/>
            <person name="Lu Y.-P."/>
            <person name="Flavell R.B."/>
            <person name="Feldmann K.A."/>
        </authorList>
    </citation>
    <scope>NUCLEOTIDE SEQUENCE [LARGE SCALE MRNA]</scope>
</reference>
<reference key="6">
    <citation type="journal article" date="2008" name="BMC Genomics">
        <title>Genome-wide analysis of CCCH zinc finger family in Arabidopsis and rice.</title>
        <authorList>
            <person name="Wang D."/>
            <person name="Guo Y."/>
            <person name="Wu C."/>
            <person name="Yang G."/>
            <person name="Li Y."/>
            <person name="Zheng C."/>
        </authorList>
    </citation>
    <scope>NOMENCLATURE</scope>
</reference>
<reference key="7">
    <citation type="journal article" date="2008" name="FEBS Lett.">
        <title>Ribonuclease activity is a common property of Arabidopsis CCCH-containing zinc-finger proteins.</title>
        <authorList>
            <person name="Addepalli B."/>
            <person name="Hunt A.G."/>
        </authorList>
    </citation>
    <scope>FUNCTION</scope>
</reference>
<reference key="8">
    <citation type="journal article" date="2009" name="J. Proteomics">
        <title>Phosphoproteomic analysis of nuclei-enriched fractions from Arabidopsis thaliana.</title>
        <authorList>
            <person name="Jones A.M.E."/>
            <person name="MacLean D."/>
            <person name="Studholme D.J."/>
            <person name="Serna-Sanz A."/>
            <person name="Andreasson E."/>
            <person name="Rathjen J.P."/>
            <person name="Peck S.C."/>
        </authorList>
    </citation>
    <scope>PHOSPHORYLATION [LARGE SCALE ANALYSIS] AT SER-451</scope>
    <scope>IDENTIFICATION BY MASS SPECTROMETRY [LARGE SCALE ANALYSIS]</scope>
    <source>
        <strain>cv. Columbia</strain>
    </source>
</reference>
<proteinExistence type="evidence at protein level"/>
<evidence type="ECO:0000255" key="1">
    <source>
        <dbReference type="PROSITE-ProRule" id="PRU00176"/>
    </source>
</evidence>
<evidence type="ECO:0000255" key="2">
    <source>
        <dbReference type="PROSITE-ProRule" id="PRU00723"/>
    </source>
</evidence>
<evidence type="ECO:0000256" key="3">
    <source>
        <dbReference type="SAM" id="MobiDB-lite"/>
    </source>
</evidence>
<evidence type="ECO:0000269" key="4">
    <source>
    </source>
</evidence>
<evidence type="ECO:0000305" key="5"/>
<evidence type="ECO:0007744" key="6">
    <source>
    </source>
</evidence>